<name>DDL_LAWIP</name>
<reference key="1">
    <citation type="submission" date="2005-11" db="EMBL/GenBank/DDBJ databases">
        <title>The complete genome sequence of Lawsonia intracellularis: the causative agent of proliferative enteropathy.</title>
        <authorList>
            <person name="Kaur K."/>
            <person name="Zhang Q."/>
            <person name="Beckler D."/>
            <person name="Munir S."/>
            <person name="Li L."/>
            <person name="Kinsley K."/>
            <person name="Herron L."/>
            <person name="Peterson A."/>
            <person name="May B."/>
            <person name="Singh S."/>
            <person name="Gebhart C."/>
            <person name="Kapur V."/>
        </authorList>
    </citation>
    <scope>NUCLEOTIDE SEQUENCE [LARGE SCALE GENOMIC DNA]</scope>
    <source>
        <strain>PHE/MN1-00</strain>
    </source>
</reference>
<gene>
    <name evidence="2" type="primary">ddl</name>
    <name type="ordered locus">LI0682</name>
</gene>
<evidence type="ECO:0000250" key="1"/>
<evidence type="ECO:0000255" key="2">
    <source>
        <dbReference type="HAMAP-Rule" id="MF_00047"/>
    </source>
</evidence>
<sequence>MNILLLAGGWSSEREVSLQSAELITSAMIEYGHTVTCLDPLYDFDKIVEVAEKQDVAFILLHGSPGEDGILQALLERVGCPYQGASPAGSLLALHKAAAKALFRREGLLTPKSVFLPLKPEVTWEPGLNYPIFVKSNIGGSSVNVHLVTNYEELFIAMEALFNAGEEVLLEEAIIGQEVTCGVIDDQALPPILIRSQGKFFDYYNKYAKNGAEEICPAPLEPHVLKHIQEYALRAHNTLNLQGCSRADFILRDDELLFLLEVNTIPGMSATSLVPREAAAMGLTFPELVEKLIQLAIRDHRK</sequence>
<feature type="chain" id="PRO_1000030457" description="D-alanine--D-alanine ligase">
    <location>
        <begin position="1"/>
        <end position="302"/>
    </location>
</feature>
<feature type="domain" description="ATP-grasp" evidence="2">
    <location>
        <begin position="100"/>
        <end position="294"/>
    </location>
</feature>
<feature type="binding site" evidence="2">
    <location>
        <begin position="127"/>
        <end position="180"/>
    </location>
    <ligand>
        <name>ATP</name>
        <dbReference type="ChEBI" id="CHEBI:30616"/>
    </ligand>
</feature>
<feature type="binding site" evidence="2">
    <location>
        <position position="248"/>
    </location>
    <ligand>
        <name>Mg(2+)</name>
        <dbReference type="ChEBI" id="CHEBI:18420"/>
        <label>1</label>
    </ligand>
</feature>
<feature type="binding site" evidence="2">
    <location>
        <position position="261"/>
    </location>
    <ligand>
        <name>Mg(2+)</name>
        <dbReference type="ChEBI" id="CHEBI:18420"/>
        <label>1</label>
    </ligand>
</feature>
<feature type="binding site" evidence="2">
    <location>
        <position position="261"/>
    </location>
    <ligand>
        <name>Mg(2+)</name>
        <dbReference type="ChEBI" id="CHEBI:18420"/>
        <label>2</label>
    </ligand>
</feature>
<feature type="binding site" evidence="2">
    <location>
        <position position="263"/>
    </location>
    <ligand>
        <name>Mg(2+)</name>
        <dbReference type="ChEBI" id="CHEBI:18420"/>
        <label>2</label>
    </ligand>
</feature>
<organism>
    <name type="scientific">Lawsonia intracellularis (strain PHE/MN1-00)</name>
    <dbReference type="NCBI Taxonomy" id="363253"/>
    <lineage>
        <taxon>Bacteria</taxon>
        <taxon>Pseudomonadati</taxon>
        <taxon>Thermodesulfobacteriota</taxon>
        <taxon>Desulfovibrionia</taxon>
        <taxon>Desulfovibrionales</taxon>
        <taxon>Desulfovibrionaceae</taxon>
        <taxon>Lawsonia</taxon>
    </lineage>
</organism>
<keyword id="KW-0067">ATP-binding</keyword>
<keyword id="KW-0133">Cell shape</keyword>
<keyword id="KW-0961">Cell wall biogenesis/degradation</keyword>
<keyword id="KW-0963">Cytoplasm</keyword>
<keyword id="KW-0436">Ligase</keyword>
<keyword id="KW-0460">Magnesium</keyword>
<keyword id="KW-0464">Manganese</keyword>
<keyword id="KW-0479">Metal-binding</keyword>
<keyword id="KW-0547">Nucleotide-binding</keyword>
<keyword id="KW-0573">Peptidoglycan synthesis</keyword>
<keyword id="KW-1185">Reference proteome</keyword>
<comment type="function">
    <text evidence="2">Cell wall formation.</text>
</comment>
<comment type="catalytic activity">
    <reaction evidence="2">
        <text>2 D-alanine + ATP = D-alanyl-D-alanine + ADP + phosphate + H(+)</text>
        <dbReference type="Rhea" id="RHEA:11224"/>
        <dbReference type="ChEBI" id="CHEBI:15378"/>
        <dbReference type="ChEBI" id="CHEBI:30616"/>
        <dbReference type="ChEBI" id="CHEBI:43474"/>
        <dbReference type="ChEBI" id="CHEBI:57416"/>
        <dbReference type="ChEBI" id="CHEBI:57822"/>
        <dbReference type="ChEBI" id="CHEBI:456216"/>
        <dbReference type="EC" id="6.3.2.4"/>
    </reaction>
</comment>
<comment type="cofactor">
    <cofactor evidence="1">
        <name>Mg(2+)</name>
        <dbReference type="ChEBI" id="CHEBI:18420"/>
    </cofactor>
    <cofactor evidence="1">
        <name>Mn(2+)</name>
        <dbReference type="ChEBI" id="CHEBI:29035"/>
    </cofactor>
    <text evidence="1">Binds 2 magnesium or manganese ions per subunit.</text>
</comment>
<comment type="pathway">
    <text evidence="2">Cell wall biogenesis; peptidoglycan biosynthesis.</text>
</comment>
<comment type="subcellular location">
    <subcellularLocation>
        <location evidence="2">Cytoplasm</location>
    </subcellularLocation>
</comment>
<comment type="similarity">
    <text evidence="2">Belongs to the D-alanine--D-alanine ligase family.</text>
</comment>
<accession>Q1MQJ1</accession>
<proteinExistence type="inferred from homology"/>
<protein>
    <recommendedName>
        <fullName evidence="2">D-alanine--D-alanine ligase</fullName>
        <ecNumber evidence="2">6.3.2.4</ecNumber>
    </recommendedName>
    <alternativeName>
        <fullName evidence="2">D-Ala-D-Ala ligase</fullName>
    </alternativeName>
    <alternativeName>
        <fullName evidence="2">D-alanylalanine synthetase</fullName>
    </alternativeName>
</protein>
<dbReference type="EC" id="6.3.2.4" evidence="2"/>
<dbReference type="EMBL" id="AM180252">
    <property type="protein sequence ID" value="CAJ54736.1"/>
    <property type="molecule type" value="Genomic_DNA"/>
</dbReference>
<dbReference type="RefSeq" id="WP_011526765.1">
    <property type="nucleotide sequence ID" value="NC_008011.1"/>
</dbReference>
<dbReference type="SMR" id="Q1MQJ1"/>
<dbReference type="STRING" id="363253.LI0682"/>
<dbReference type="KEGG" id="lip:LI0682"/>
<dbReference type="eggNOG" id="COG1181">
    <property type="taxonomic scope" value="Bacteria"/>
</dbReference>
<dbReference type="HOGENOM" id="CLU_039268_1_1_7"/>
<dbReference type="OrthoDB" id="9813261at2"/>
<dbReference type="UniPathway" id="UPA00219"/>
<dbReference type="Proteomes" id="UP000002430">
    <property type="component" value="Chromosome"/>
</dbReference>
<dbReference type="GO" id="GO:0005737">
    <property type="term" value="C:cytoplasm"/>
    <property type="evidence" value="ECO:0007669"/>
    <property type="project" value="UniProtKB-SubCell"/>
</dbReference>
<dbReference type="GO" id="GO:0005524">
    <property type="term" value="F:ATP binding"/>
    <property type="evidence" value="ECO:0007669"/>
    <property type="project" value="UniProtKB-KW"/>
</dbReference>
<dbReference type="GO" id="GO:0008716">
    <property type="term" value="F:D-alanine-D-alanine ligase activity"/>
    <property type="evidence" value="ECO:0007669"/>
    <property type="project" value="UniProtKB-UniRule"/>
</dbReference>
<dbReference type="GO" id="GO:0046872">
    <property type="term" value="F:metal ion binding"/>
    <property type="evidence" value="ECO:0007669"/>
    <property type="project" value="UniProtKB-KW"/>
</dbReference>
<dbReference type="GO" id="GO:0071555">
    <property type="term" value="P:cell wall organization"/>
    <property type="evidence" value="ECO:0007669"/>
    <property type="project" value="UniProtKB-KW"/>
</dbReference>
<dbReference type="GO" id="GO:0009252">
    <property type="term" value="P:peptidoglycan biosynthetic process"/>
    <property type="evidence" value="ECO:0007669"/>
    <property type="project" value="UniProtKB-UniRule"/>
</dbReference>
<dbReference type="GO" id="GO:0008360">
    <property type="term" value="P:regulation of cell shape"/>
    <property type="evidence" value="ECO:0007669"/>
    <property type="project" value="UniProtKB-KW"/>
</dbReference>
<dbReference type="Gene3D" id="3.40.50.20">
    <property type="match status" value="1"/>
</dbReference>
<dbReference type="Gene3D" id="3.30.1490.20">
    <property type="entry name" value="ATP-grasp fold, A domain"/>
    <property type="match status" value="1"/>
</dbReference>
<dbReference type="Gene3D" id="3.30.470.20">
    <property type="entry name" value="ATP-grasp fold, B domain"/>
    <property type="match status" value="1"/>
</dbReference>
<dbReference type="HAMAP" id="MF_00047">
    <property type="entry name" value="Dala_Dala_lig"/>
    <property type="match status" value="1"/>
</dbReference>
<dbReference type="InterPro" id="IPR011761">
    <property type="entry name" value="ATP-grasp"/>
</dbReference>
<dbReference type="InterPro" id="IPR013815">
    <property type="entry name" value="ATP_grasp_subdomain_1"/>
</dbReference>
<dbReference type="InterPro" id="IPR000291">
    <property type="entry name" value="D-Ala_lig_Van_CS"/>
</dbReference>
<dbReference type="InterPro" id="IPR005905">
    <property type="entry name" value="D_ala_D_ala"/>
</dbReference>
<dbReference type="InterPro" id="IPR011095">
    <property type="entry name" value="Dala_Dala_lig_C"/>
</dbReference>
<dbReference type="InterPro" id="IPR011127">
    <property type="entry name" value="Dala_Dala_lig_N"/>
</dbReference>
<dbReference type="InterPro" id="IPR016185">
    <property type="entry name" value="PreATP-grasp_dom_sf"/>
</dbReference>
<dbReference type="NCBIfam" id="TIGR01205">
    <property type="entry name" value="D_ala_D_alaTIGR"/>
    <property type="match status" value="1"/>
</dbReference>
<dbReference type="NCBIfam" id="NF002378">
    <property type="entry name" value="PRK01372.1"/>
    <property type="match status" value="1"/>
</dbReference>
<dbReference type="PANTHER" id="PTHR23132">
    <property type="entry name" value="D-ALANINE--D-ALANINE LIGASE"/>
    <property type="match status" value="1"/>
</dbReference>
<dbReference type="PANTHER" id="PTHR23132:SF23">
    <property type="entry name" value="D-ALANINE--D-ALANINE LIGASE B"/>
    <property type="match status" value="1"/>
</dbReference>
<dbReference type="Pfam" id="PF07478">
    <property type="entry name" value="Dala_Dala_lig_C"/>
    <property type="match status" value="1"/>
</dbReference>
<dbReference type="Pfam" id="PF01820">
    <property type="entry name" value="Dala_Dala_lig_N"/>
    <property type="match status" value="1"/>
</dbReference>
<dbReference type="PIRSF" id="PIRSF039102">
    <property type="entry name" value="Ddl/VanB"/>
    <property type="match status" value="1"/>
</dbReference>
<dbReference type="SUPFAM" id="SSF56059">
    <property type="entry name" value="Glutathione synthetase ATP-binding domain-like"/>
    <property type="match status" value="1"/>
</dbReference>
<dbReference type="SUPFAM" id="SSF52440">
    <property type="entry name" value="PreATP-grasp domain"/>
    <property type="match status" value="1"/>
</dbReference>
<dbReference type="PROSITE" id="PS50975">
    <property type="entry name" value="ATP_GRASP"/>
    <property type="match status" value="1"/>
</dbReference>
<dbReference type="PROSITE" id="PS00843">
    <property type="entry name" value="DALA_DALA_LIGASE_1"/>
    <property type="match status" value="1"/>
</dbReference>
<dbReference type="PROSITE" id="PS00844">
    <property type="entry name" value="DALA_DALA_LIGASE_2"/>
    <property type="match status" value="1"/>
</dbReference>